<gene>
    <name type="ordered locus">MSMEG_1479</name>
    <name type="ordered locus">MSMEI_1443</name>
</gene>
<organism>
    <name type="scientific">Mycolicibacterium smegmatis (strain ATCC 700084 / mc(2)155)</name>
    <name type="common">Mycobacterium smegmatis</name>
    <dbReference type="NCBI Taxonomy" id="246196"/>
    <lineage>
        <taxon>Bacteria</taxon>
        <taxon>Bacillati</taxon>
        <taxon>Actinomycetota</taxon>
        <taxon>Actinomycetes</taxon>
        <taxon>Mycobacteriales</taxon>
        <taxon>Mycobacteriaceae</taxon>
        <taxon>Mycolicibacterium</taxon>
    </lineage>
</organism>
<dbReference type="EC" id="2.1.1.-"/>
<dbReference type="EMBL" id="CP000480">
    <property type="protein sequence ID" value="ABK72485.1"/>
    <property type="molecule type" value="Genomic_DNA"/>
</dbReference>
<dbReference type="EMBL" id="CP001663">
    <property type="protein sequence ID" value="AFP37916.1"/>
    <property type="molecule type" value="Genomic_DNA"/>
</dbReference>
<dbReference type="RefSeq" id="WP_003892866.1">
    <property type="nucleotide sequence ID" value="NZ_SIJM01000016.1"/>
</dbReference>
<dbReference type="RefSeq" id="YP_885861.1">
    <property type="nucleotide sequence ID" value="NC_008596.1"/>
</dbReference>
<dbReference type="SMR" id="A0QSH3"/>
<dbReference type="STRING" id="246196.MSMEG_1479"/>
<dbReference type="PaxDb" id="246196-MSMEI_1443"/>
<dbReference type="KEGG" id="msb:LJ00_07390"/>
<dbReference type="KEGG" id="msg:MSMEI_1443"/>
<dbReference type="KEGG" id="msm:MSMEG_1479"/>
<dbReference type="PATRIC" id="fig|246196.19.peg.1464"/>
<dbReference type="eggNOG" id="COG3315">
    <property type="taxonomic scope" value="Bacteria"/>
</dbReference>
<dbReference type="OrthoDB" id="9806164at2"/>
<dbReference type="Proteomes" id="UP000000757">
    <property type="component" value="Chromosome"/>
</dbReference>
<dbReference type="Proteomes" id="UP000006158">
    <property type="component" value="Chromosome"/>
</dbReference>
<dbReference type="GO" id="GO:0008168">
    <property type="term" value="F:methyltransferase activity"/>
    <property type="evidence" value="ECO:0007669"/>
    <property type="project" value="UniProtKB-KW"/>
</dbReference>
<dbReference type="GO" id="GO:0032259">
    <property type="term" value="P:methylation"/>
    <property type="evidence" value="ECO:0007669"/>
    <property type="project" value="UniProtKB-KW"/>
</dbReference>
<dbReference type="FunFam" id="3.40.50.150:FF:000152">
    <property type="entry name" value="S-adenosyl-L-methionine-dependent methyltransferase"/>
    <property type="match status" value="1"/>
</dbReference>
<dbReference type="Gene3D" id="3.40.50.150">
    <property type="entry name" value="Vaccinia Virus protein VP39"/>
    <property type="match status" value="1"/>
</dbReference>
<dbReference type="InterPro" id="IPR007213">
    <property type="entry name" value="Ppm1/Ppm2/Tcmp"/>
</dbReference>
<dbReference type="InterPro" id="IPR029063">
    <property type="entry name" value="SAM-dependent_MTases_sf"/>
</dbReference>
<dbReference type="InterPro" id="IPR011610">
    <property type="entry name" value="SAM_mthyl_Trfase_ML2640-like"/>
</dbReference>
<dbReference type="NCBIfam" id="TIGR00027">
    <property type="entry name" value="mthyl_TIGR00027"/>
    <property type="match status" value="1"/>
</dbReference>
<dbReference type="PANTHER" id="PTHR43619">
    <property type="entry name" value="S-ADENOSYL-L-METHIONINE-DEPENDENT METHYLTRANSFERASE YKTD-RELATED"/>
    <property type="match status" value="1"/>
</dbReference>
<dbReference type="PANTHER" id="PTHR43619:SF2">
    <property type="entry name" value="S-ADENOSYL-L-METHIONINE-DEPENDENT METHYLTRANSFERASES SUPERFAMILY PROTEIN"/>
    <property type="match status" value="1"/>
</dbReference>
<dbReference type="Pfam" id="PF04072">
    <property type="entry name" value="LCM"/>
    <property type="match status" value="1"/>
</dbReference>
<dbReference type="SUPFAM" id="SSF53335">
    <property type="entry name" value="S-adenosyl-L-methionine-dependent methyltransferases"/>
    <property type="match status" value="1"/>
</dbReference>
<evidence type="ECO:0000250" key="1"/>
<evidence type="ECO:0000305" key="2"/>
<protein>
    <recommendedName>
        <fullName>Putative S-adenosyl-L-methionine-dependent methyltransferase MSMEG_1479/MSMEI_1443</fullName>
        <ecNumber>2.1.1.-</ecNumber>
    </recommendedName>
</protein>
<feature type="chain" id="PRO_0000361195" description="Putative S-adenosyl-L-methionine-dependent methyltransferase MSMEG_1479/MSMEI_1443">
    <location>
        <begin position="1"/>
        <end position="303"/>
    </location>
</feature>
<feature type="binding site" evidence="1">
    <location>
        <position position="130"/>
    </location>
    <ligand>
        <name>S-adenosyl-L-methionine</name>
        <dbReference type="ChEBI" id="CHEBI:59789"/>
    </ligand>
</feature>
<feature type="binding site" evidence="1">
    <location>
        <begin position="159"/>
        <end position="160"/>
    </location>
    <ligand>
        <name>S-adenosyl-L-methionine</name>
        <dbReference type="ChEBI" id="CHEBI:59789"/>
    </ligand>
</feature>
<accession>A0QSH3</accession>
<accession>I7G440</accession>
<reference key="1">
    <citation type="submission" date="2006-10" db="EMBL/GenBank/DDBJ databases">
        <authorList>
            <person name="Fleischmann R.D."/>
            <person name="Dodson R.J."/>
            <person name="Haft D.H."/>
            <person name="Merkel J.S."/>
            <person name="Nelson W.C."/>
            <person name="Fraser C.M."/>
        </authorList>
    </citation>
    <scope>NUCLEOTIDE SEQUENCE [LARGE SCALE GENOMIC DNA]</scope>
    <source>
        <strain>ATCC 700084 / mc(2)155</strain>
    </source>
</reference>
<reference key="2">
    <citation type="journal article" date="2007" name="Genome Biol.">
        <title>Interrupted coding sequences in Mycobacterium smegmatis: authentic mutations or sequencing errors?</title>
        <authorList>
            <person name="Deshayes C."/>
            <person name="Perrodou E."/>
            <person name="Gallien S."/>
            <person name="Euphrasie D."/>
            <person name="Schaeffer C."/>
            <person name="Van-Dorsselaer A."/>
            <person name="Poch O."/>
            <person name="Lecompte O."/>
            <person name="Reyrat J.-M."/>
        </authorList>
    </citation>
    <scope>NUCLEOTIDE SEQUENCE [LARGE SCALE GENOMIC DNA]</scope>
    <source>
        <strain>ATCC 700084 / mc(2)155</strain>
    </source>
</reference>
<reference key="3">
    <citation type="journal article" date="2009" name="Genome Res.">
        <title>Ortho-proteogenomics: multiple proteomes investigation through orthology and a new MS-based protocol.</title>
        <authorList>
            <person name="Gallien S."/>
            <person name="Perrodou E."/>
            <person name="Carapito C."/>
            <person name="Deshayes C."/>
            <person name="Reyrat J.-M."/>
            <person name="Van Dorsselaer A."/>
            <person name="Poch O."/>
            <person name="Schaeffer C."/>
            <person name="Lecompte O."/>
        </authorList>
    </citation>
    <scope>NUCLEOTIDE SEQUENCE [LARGE SCALE GENOMIC DNA]</scope>
    <source>
        <strain>ATCC 700084 / mc(2)155</strain>
    </source>
</reference>
<sequence length="303" mass="32948">MVRSDNDTWDLASSVGATATMVAAGRAVVSQDPGGLINDPFAAPLVRAVGIEALTMLADGKFDIEKVLPESAARVRANIDEMAVRTKFFDDYFMDATGRGVGQAVILASGLDSRAYRLPWPDGTVVYEIDQPDVIEFKTRTLADLGAEPTCERRTVSIDLRDDWPAALRAAGFDPSAPTAWCAEGLLIYLPPEAQDKLFDDIHHLSAPGSTVATEFVPALKDFDPEKARQATETLTRMGVDIDMPSLIYHGERHSASDYLETKGWQMDSAARATLFTRYGLPAPGHDDDDPLGEIIYISGTLR</sequence>
<keyword id="KW-0489">Methyltransferase</keyword>
<keyword id="KW-1185">Reference proteome</keyword>
<keyword id="KW-0949">S-adenosyl-L-methionine</keyword>
<keyword id="KW-0808">Transferase</keyword>
<comment type="function">
    <text evidence="1">Exhibits S-adenosyl-L-methionine-dependent methyltransferase activity.</text>
</comment>
<comment type="similarity">
    <text evidence="2">Belongs to the UPF0677 family.</text>
</comment>
<name>Y1479_MYCS2</name>
<proteinExistence type="inferred from homology"/>